<name>Y543_CHLPN</name>
<comment type="function">
    <text>Part of an ATP-driven transport system CPn_0541/CPn_0542/CPn_0543 for a metal.</text>
</comment>
<comment type="subcellular location">
    <subcellularLocation>
        <location evidence="2">Cell inner membrane</location>
        <topology evidence="2">Multi-pass membrane protein</topology>
    </subcellularLocation>
</comment>
<comment type="similarity">
    <text evidence="2">Belongs to the ABC-3 integral membrane protein family.</text>
</comment>
<comment type="sequence caution" evidence="2">
    <conflict type="erroneous initiation">
        <sequence resource="EMBL-CDS" id="AAP98493"/>
    </conflict>
</comment>
<sequence length="293" mass="32243">MLSSLIRDSFPLLILLPTFLAALGASVAGGVMGTYIVVKRIVSISGSISHAILGGIGLTLWIQYKLHLSFFPMYGAIVGAIFLALCIGKIHLKYQEREDSLIAMIWSVGMAIGIIFISRLPTFNGELINFLFGNILWVTPSDLYSLGIFDLLVLGIVVLCHTRFLALCFDERYTALNHCSVQLWYFLLLVLTAITIVMLIYVMGTILMLSMLVLPVAIACRFSYKMTRIMFISVLLNILCSFSGICIAYCLDFPVGPTISLLMGLGYTASLCVKKRYNPSTPSPVSPEINTNV</sequence>
<dbReference type="EMBL" id="AE001363">
    <property type="protein sequence ID" value="AAD18683.1"/>
    <property type="molecule type" value="Genomic_DNA"/>
</dbReference>
<dbReference type="EMBL" id="AE002161">
    <property type="protein sequence ID" value="AAF38080.1"/>
    <property type="molecule type" value="Genomic_DNA"/>
</dbReference>
<dbReference type="EMBL" id="BA000008">
    <property type="protein sequence ID" value="BAA98749.1"/>
    <property type="molecule type" value="Genomic_DNA"/>
</dbReference>
<dbReference type="EMBL" id="AE009440">
    <property type="protein sequence ID" value="AAP98493.1"/>
    <property type="status" value="ALT_INIT"/>
    <property type="molecule type" value="Genomic_DNA"/>
</dbReference>
<dbReference type="PIR" id="C86558">
    <property type="entry name" value="C86558"/>
</dbReference>
<dbReference type="PIR" id="H72064">
    <property type="entry name" value="H72064"/>
</dbReference>
<dbReference type="RefSeq" id="NP_224739.1">
    <property type="nucleotide sequence ID" value="NC_000922.1"/>
</dbReference>
<dbReference type="RefSeq" id="WP_010883181.1">
    <property type="nucleotide sequence ID" value="NZ_LN847257.1"/>
</dbReference>
<dbReference type="SMR" id="Q9Z809"/>
<dbReference type="GeneID" id="45050586"/>
<dbReference type="KEGG" id="cpa:CP_0209"/>
<dbReference type="KEGG" id="cpj:CPj0543"/>
<dbReference type="KEGG" id="cpn:CPn_0543"/>
<dbReference type="KEGG" id="cpt:CpB0565"/>
<dbReference type="PATRIC" id="fig|115713.3.peg.603"/>
<dbReference type="eggNOG" id="COG1108">
    <property type="taxonomic scope" value="Bacteria"/>
</dbReference>
<dbReference type="HOGENOM" id="CLU_028808_3_0_0"/>
<dbReference type="OrthoDB" id="9798540at2"/>
<dbReference type="Proteomes" id="UP000000583">
    <property type="component" value="Chromosome"/>
</dbReference>
<dbReference type="Proteomes" id="UP000000801">
    <property type="component" value="Chromosome"/>
</dbReference>
<dbReference type="GO" id="GO:0043190">
    <property type="term" value="C:ATP-binding cassette (ABC) transporter complex"/>
    <property type="evidence" value="ECO:0007669"/>
    <property type="project" value="InterPro"/>
</dbReference>
<dbReference type="GO" id="GO:0010043">
    <property type="term" value="P:response to zinc ion"/>
    <property type="evidence" value="ECO:0007669"/>
    <property type="project" value="TreeGrafter"/>
</dbReference>
<dbReference type="GO" id="GO:0055085">
    <property type="term" value="P:transmembrane transport"/>
    <property type="evidence" value="ECO:0007669"/>
    <property type="project" value="InterPro"/>
</dbReference>
<dbReference type="CDD" id="cd06550">
    <property type="entry name" value="TM_ABC_iron-siderophores_like"/>
    <property type="match status" value="1"/>
</dbReference>
<dbReference type="Gene3D" id="1.10.3470.10">
    <property type="entry name" value="ABC transporter involved in vitamin B12 uptake, BtuC"/>
    <property type="match status" value="1"/>
</dbReference>
<dbReference type="InterPro" id="IPR037294">
    <property type="entry name" value="ABC_BtuC-like"/>
</dbReference>
<dbReference type="InterPro" id="IPR001626">
    <property type="entry name" value="ABC_TroCD"/>
</dbReference>
<dbReference type="PANTHER" id="PTHR30477">
    <property type="entry name" value="ABC-TRANSPORTER METAL-BINDING PROTEIN"/>
    <property type="match status" value="1"/>
</dbReference>
<dbReference type="PANTHER" id="PTHR30477:SF18">
    <property type="entry name" value="METAL TRANSPORT SYSTEM MEMBRANE PROTEIN CT_417-RELATED"/>
    <property type="match status" value="1"/>
</dbReference>
<dbReference type="Pfam" id="PF00950">
    <property type="entry name" value="ABC-3"/>
    <property type="match status" value="1"/>
</dbReference>
<dbReference type="SUPFAM" id="SSF81345">
    <property type="entry name" value="ABC transporter involved in vitamin B12 uptake, BtuC"/>
    <property type="match status" value="1"/>
</dbReference>
<reference key="1">
    <citation type="journal article" date="1999" name="Nat. Genet.">
        <title>Comparative genomes of Chlamydia pneumoniae and C. trachomatis.</title>
        <authorList>
            <person name="Kalman S."/>
            <person name="Mitchell W.P."/>
            <person name="Marathe R."/>
            <person name="Lammel C.J."/>
            <person name="Fan J."/>
            <person name="Hyman R.W."/>
            <person name="Olinger L."/>
            <person name="Grimwood J."/>
            <person name="Davis R.W."/>
            <person name="Stephens R.S."/>
        </authorList>
    </citation>
    <scope>NUCLEOTIDE SEQUENCE [LARGE SCALE GENOMIC DNA]</scope>
    <source>
        <strain>CWL029</strain>
    </source>
</reference>
<reference key="2">
    <citation type="journal article" date="2000" name="Nucleic Acids Res.">
        <title>Genome sequences of Chlamydia trachomatis MoPn and Chlamydia pneumoniae AR39.</title>
        <authorList>
            <person name="Read T.D."/>
            <person name="Brunham R.C."/>
            <person name="Shen C."/>
            <person name="Gill S.R."/>
            <person name="Heidelberg J.F."/>
            <person name="White O."/>
            <person name="Hickey E.K."/>
            <person name="Peterson J.D."/>
            <person name="Utterback T.R."/>
            <person name="Berry K.J."/>
            <person name="Bass S."/>
            <person name="Linher K.D."/>
            <person name="Weidman J.F."/>
            <person name="Khouri H.M."/>
            <person name="Craven B."/>
            <person name="Bowman C."/>
            <person name="Dodson R.J."/>
            <person name="Gwinn M.L."/>
            <person name="Nelson W.C."/>
            <person name="DeBoy R.T."/>
            <person name="Kolonay J.F."/>
            <person name="McClarty G."/>
            <person name="Salzberg S.L."/>
            <person name="Eisen J.A."/>
            <person name="Fraser C.M."/>
        </authorList>
    </citation>
    <scope>NUCLEOTIDE SEQUENCE [LARGE SCALE GENOMIC DNA]</scope>
    <source>
        <strain>AR39</strain>
    </source>
</reference>
<reference key="3">
    <citation type="journal article" date="2000" name="Nucleic Acids Res.">
        <title>Comparison of whole genome sequences of Chlamydia pneumoniae J138 from Japan and CWL029 from USA.</title>
        <authorList>
            <person name="Shirai M."/>
            <person name="Hirakawa H."/>
            <person name="Kimoto M."/>
            <person name="Tabuchi M."/>
            <person name="Kishi F."/>
            <person name="Ouchi K."/>
            <person name="Shiba T."/>
            <person name="Ishii K."/>
            <person name="Hattori M."/>
            <person name="Kuhara S."/>
            <person name="Nakazawa T."/>
        </authorList>
    </citation>
    <scope>NUCLEOTIDE SEQUENCE [LARGE SCALE GENOMIC DNA]</scope>
    <source>
        <strain>J138</strain>
    </source>
</reference>
<reference key="4">
    <citation type="submission" date="2002-05" db="EMBL/GenBank/DDBJ databases">
        <title>The genome sequence of Chlamydia pneumoniae TW183 and comparison with other Chlamydia strains based on whole genome sequence analysis.</title>
        <authorList>
            <person name="Geng M.M."/>
            <person name="Schuhmacher A."/>
            <person name="Muehldorfer I."/>
            <person name="Bensch K.W."/>
            <person name="Schaefer K.P."/>
            <person name="Schneider S."/>
            <person name="Pohl T."/>
            <person name="Essig A."/>
            <person name="Marre R."/>
            <person name="Melchers K."/>
        </authorList>
    </citation>
    <scope>NUCLEOTIDE SEQUENCE [LARGE SCALE GENOMIC DNA]</scope>
    <source>
        <strain>TW-183</strain>
    </source>
</reference>
<organism>
    <name type="scientific">Chlamydia pneumoniae</name>
    <name type="common">Chlamydophila pneumoniae</name>
    <dbReference type="NCBI Taxonomy" id="83558"/>
    <lineage>
        <taxon>Bacteria</taxon>
        <taxon>Pseudomonadati</taxon>
        <taxon>Chlamydiota</taxon>
        <taxon>Chlamydiia</taxon>
        <taxon>Chlamydiales</taxon>
        <taxon>Chlamydiaceae</taxon>
        <taxon>Chlamydia/Chlamydophila group</taxon>
        <taxon>Chlamydia</taxon>
    </lineage>
</organism>
<evidence type="ECO:0000255" key="1"/>
<evidence type="ECO:0000305" key="2"/>
<protein>
    <recommendedName>
        <fullName>Probable metal transport system membrane protein CPn_0543/CP_0209/CPj0543/CpB0565</fullName>
    </recommendedName>
</protein>
<accession>Q9Z809</accession>
<gene>
    <name type="ordered locus">CPn_0543</name>
    <name type="ordered locus">CP_0209</name>
    <name type="ordered locus">CPj0543</name>
    <name type="ordered locus">CpB0565</name>
</gene>
<feature type="chain" id="PRO_0000171170" description="Probable metal transport system membrane protein CPn_0543/CP_0209/CPj0543/CpB0565">
    <location>
        <begin position="1"/>
        <end position="293"/>
    </location>
</feature>
<feature type="transmembrane region" description="Helical" evidence="1">
    <location>
        <begin position="12"/>
        <end position="32"/>
    </location>
</feature>
<feature type="transmembrane region" description="Helical" evidence="1">
    <location>
        <begin position="41"/>
        <end position="61"/>
    </location>
</feature>
<feature type="transmembrane region" description="Helical" evidence="1">
    <location>
        <begin position="68"/>
        <end position="88"/>
    </location>
</feature>
<feature type="transmembrane region" description="Helical" evidence="1">
    <location>
        <begin position="101"/>
        <end position="121"/>
    </location>
</feature>
<feature type="transmembrane region" description="Helical" evidence="1">
    <location>
        <begin position="140"/>
        <end position="160"/>
    </location>
</feature>
<feature type="transmembrane region" description="Helical" evidence="1">
    <location>
        <begin position="183"/>
        <end position="203"/>
    </location>
</feature>
<feature type="transmembrane region" description="Helical" evidence="1">
    <location>
        <begin position="253"/>
        <end position="273"/>
    </location>
</feature>
<keyword id="KW-0997">Cell inner membrane</keyword>
<keyword id="KW-1003">Cell membrane</keyword>
<keyword id="KW-0472">Membrane</keyword>
<keyword id="KW-0812">Transmembrane</keyword>
<keyword id="KW-1133">Transmembrane helix</keyword>
<keyword id="KW-0813">Transport</keyword>
<proteinExistence type="inferred from homology"/>